<sequence length="199" mass="21871">MHGDPQQLELLRVARIGRAQGLKGEVTVRLYTDDPEWRFEPDSVLYSQDGETEYIVEGSRTFKDRWILKLEGVDDRNAAEALNGVELYGEADDAEDMLEADEWYPKDLIGLEARLVEGNGLGLPAGQVVGKVVDVVDSPAQSLLKIRLTEPVVTGQNSKGEDVVEKTALVPFVEALVPDIDLEEQYLTLDPPGGLIPGL</sequence>
<reference key="1">
    <citation type="journal article" date="2008" name="BMC Genomics">
        <title>Comparative genomic analysis of the gut bacterium Bifidobacterium longum reveals loci susceptible to deletion during pure culture growth.</title>
        <authorList>
            <person name="Lee J.H."/>
            <person name="Karamychev V.N."/>
            <person name="Kozyavkin S.A."/>
            <person name="Mills D."/>
            <person name="Pavlov A.R."/>
            <person name="Pavlova N.V."/>
            <person name="Polouchine N.N."/>
            <person name="Richardson P.M."/>
            <person name="Shakhova V.V."/>
            <person name="Slesarev A.I."/>
            <person name="Weimer B."/>
            <person name="O'Sullivan D.J."/>
        </authorList>
    </citation>
    <scope>NUCLEOTIDE SEQUENCE [LARGE SCALE GENOMIC DNA]</scope>
    <source>
        <strain>DJO10A</strain>
    </source>
</reference>
<accession>B3DTN1</accession>
<dbReference type="EMBL" id="CP000605">
    <property type="protein sequence ID" value="ACD98500.1"/>
    <property type="status" value="ALT_INIT"/>
    <property type="molecule type" value="Genomic_DNA"/>
</dbReference>
<dbReference type="SMR" id="B3DTN1"/>
<dbReference type="KEGG" id="blj:BLD_1054"/>
<dbReference type="HOGENOM" id="CLU_077636_0_0_11"/>
<dbReference type="Proteomes" id="UP000002419">
    <property type="component" value="Chromosome"/>
</dbReference>
<dbReference type="GO" id="GO:0005737">
    <property type="term" value="C:cytoplasm"/>
    <property type="evidence" value="ECO:0007669"/>
    <property type="project" value="UniProtKB-SubCell"/>
</dbReference>
<dbReference type="GO" id="GO:0005840">
    <property type="term" value="C:ribosome"/>
    <property type="evidence" value="ECO:0007669"/>
    <property type="project" value="InterPro"/>
</dbReference>
<dbReference type="GO" id="GO:0043022">
    <property type="term" value="F:ribosome binding"/>
    <property type="evidence" value="ECO:0007669"/>
    <property type="project" value="InterPro"/>
</dbReference>
<dbReference type="GO" id="GO:0042274">
    <property type="term" value="P:ribosomal small subunit biogenesis"/>
    <property type="evidence" value="ECO:0007669"/>
    <property type="project" value="UniProtKB-UniRule"/>
</dbReference>
<dbReference type="GO" id="GO:0006364">
    <property type="term" value="P:rRNA processing"/>
    <property type="evidence" value="ECO:0007669"/>
    <property type="project" value="UniProtKB-UniRule"/>
</dbReference>
<dbReference type="Gene3D" id="2.30.30.240">
    <property type="entry name" value="PRC-barrel domain"/>
    <property type="match status" value="1"/>
</dbReference>
<dbReference type="Gene3D" id="2.40.30.60">
    <property type="entry name" value="RimM"/>
    <property type="match status" value="1"/>
</dbReference>
<dbReference type="HAMAP" id="MF_00014">
    <property type="entry name" value="Ribosome_mat_RimM"/>
    <property type="match status" value="1"/>
</dbReference>
<dbReference type="InterPro" id="IPR011033">
    <property type="entry name" value="PRC_barrel-like_sf"/>
</dbReference>
<dbReference type="InterPro" id="IPR056792">
    <property type="entry name" value="PRC_RimM"/>
</dbReference>
<dbReference type="InterPro" id="IPR011961">
    <property type="entry name" value="RimM"/>
</dbReference>
<dbReference type="InterPro" id="IPR002676">
    <property type="entry name" value="RimM_N"/>
</dbReference>
<dbReference type="InterPro" id="IPR036976">
    <property type="entry name" value="RimM_N_sf"/>
</dbReference>
<dbReference type="InterPro" id="IPR009000">
    <property type="entry name" value="Transl_B-barrel_sf"/>
</dbReference>
<dbReference type="NCBIfam" id="TIGR02273">
    <property type="entry name" value="16S_RimM"/>
    <property type="match status" value="1"/>
</dbReference>
<dbReference type="PANTHER" id="PTHR33692">
    <property type="entry name" value="RIBOSOME MATURATION FACTOR RIMM"/>
    <property type="match status" value="1"/>
</dbReference>
<dbReference type="PANTHER" id="PTHR33692:SF1">
    <property type="entry name" value="RIBOSOME MATURATION FACTOR RIMM"/>
    <property type="match status" value="1"/>
</dbReference>
<dbReference type="Pfam" id="PF24986">
    <property type="entry name" value="PRC_RimM"/>
    <property type="match status" value="1"/>
</dbReference>
<dbReference type="Pfam" id="PF01782">
    <property type="entry name" value="RimM"/>
    <property type="match status" value="1"/>
</dbReference>
<dbReference type="SUPFAM" id="SSF50346">
    <property type="entry name" value="PRC-barrel domain"/>
    <property type="match status" value="1"/>
</dbReference>
<dbReference type="SUPFAM" id="SSF50447">
    <property type="entry name" value="Translation proteins"/>
    <property type="match status" value="1"/>
</dbReference>
<proteinExistence type="inferred from homology"/>
<evidence type="ECO:0000255" key="1">
    <source>
        <dbReference type="HAMAP-Rule" id="MF_00014"/>
    </source>
</evidence>
<evidence type="ECO:0000305" key="2"/>
<protein>
    <recommendedName>
        <fullName evidence="1">Ribosome maturation factor RimM</fullName>
    </recommendedName>
</protein>
<name>RIMM_BIFLD</name>
<keyword id="KW-0143">Chaperone</keyword>
<keyword id="KW-0963">Cytoplasm</keyword>
<keyword id="KW-0690">Ribosome biogenesis</keyword>
<keyword id="KW-0698">rRNA processing</keyword>
<gene>
    <name evidence="1" type="primary">rimM</name>
    <name type="ordered locus">BLD_1054</name>
</gene>
<comment type="function">
    <text evidence="1">An accessory protein needed during the final step in the assembly of 30S ribosomal subunit, possibly for assembly of the head region. Essential for efficient processing of 16S rRNA. May be needed both before and after RbfA during the maturation of 16S rRNA. It has affinity for free ribosomal 30S subunits but not for 70S ribosomes.</text>
</comment>
<comment type="subunit">
    <text evidence="1">Binds ribosomal protein uS19.</text>
</comment>
<comment type="subcellular location">
    <subcellularLocation>
        <location evidence="1">Cytoplasm</location>
    </subcellularLocation>
</comment>
<comment type="domain">
    <text evidence="1">The PRC barrel domain binds ribosomal protein uS19.</text>
</comment>
<comment type="similarity">
    <text evidence="1">Belongs to the RimM family.</text>
</comment>
<comment type="sequence caution" evidence="2">
    <conflict type="erroneous initiation">
        <sequence resource="EMBL-CDS" id="ACD98500"/>
    </conflict>
</comment>
<organism>
    <name type="scientific">Bifidobacterium longum (strain DJO10A)</name>
    <dbReference type="NCBI Taxonomy" id="205913"/>
    <lineage>
        <taxon>Bacteria</taxon>
        <taxon>Bacillati</taxon>
        <taxon>Actinomycetota</taxon>
        <taxon>Actinomycetes</taxon>
        <taxon>Bifidobacteriales</taxon>
        <taxon>Bifidobacteriaceae</taxon>
        <taxon>Bifidobacterium</taxon>
    </lineage>
</organism>
<feature type="chain" id="PRO_0000351724" description="Ribosome maturation factor RimM">
    <location>
        <begin position="1"/>
        <end position="199"/>
    </location>
</feature>
<feature type="domain" description="PRC barrel" evidence="1">
    <location>
        <begin position="100"/>
        <end position="195"/>
    </location>
</feature>